<sequence>MSLIEDLKALKATAVARINATEADVEALRVSLLGKKGELTALLKGMKDVAPEERKTVGEIGNDVRQTITTLLAQKKAAEETARLNEQLAAETIDVTLPGSAHQVGQPHVLQQIIDEIEQHFLGLGFEIIDDIVDSPEVETDEYNFERENLPKDHPARDMQDTFYITPEILLRTQTSPVQSRSLEKHDFSKGPLKMIAPGKVYRRDTDDATHSHQFHQVEGMVVGENITMADLKGTLLSIMQKLFGEKHQIRMRPSYFPFTEPSVEVDVSWNEVTPDMKPEDIEWIEVLGAGMTHPNVLRMDGIDPEKYSAFAFGLGPDRFAMLKYGVDDIRQFYLNDVRFLSQFNRKGN</sequence>
<organism>
    <name type="scientific">Leuconostoc citreum (strain KM20)</name>
    <dbReference type="NCBI Taxonomy" id="349519"/>
    <lineage>
        <taxon>Bacteria</taxon>
        <taxon>Bacillati</taxon>
        <taxon>Bacillota</taxon>
        <taxon>Bacilli</taxon>
        <taxon>Lactobacillales</taxon>
        <taxon>Lactobacillaceae</taxon>
        <taxon>Leuconostoc</taxon>
    </lineage>
</organism>
<comment type="catalytic activity">
    <reaction evidence="1">
        <text>tRNA(Phe) + L-phenylalanine + ATP = L-phenylalanyl-tRNA(Phe) + AMP + diphosphate + H(+)</text>
        <dbReference type="Rhea" id="RHEA:19413"/>
        <dbReference type="Rhea" id="RHEA-COMP:9668"/>
        <dbReference type="Rhea" id="RHEA-COMP:9699"/>
        <dbReference type="ChEBI" id="CHEBI:15378"/>
        <dbReference type="ChEBI" id="CHEBI:30616"/>
        <dbReference type="ChEBI" id="CHEBI:33019"/>
        <dbReference type="ChEBI" id="CHEBI:58095"/>
        <dbReference type="ChEBI" id="CHEBI:78442"/>
        <dbReference type="ChEBI" id="CHEBI:78531"/>
        <dbReference type="ChEBI" id="CHEBI:456215"/>
        <dbReference type="EC" id="6.1.1.20"/>
    </reaction>
</comment>
<comment type="cofactor">
    <cofactor evidence="1">
        <name>Mg(2+)</name>
        <dbReference type="ChEBI" id="CHEBI:18420"/>
    </cofactor>
    <text evidence="1">Binds 2 magnesium ions per tetramer.</text>
</comment>
<comment type="subunit">
    <text evidence="1">Tetramer of two alpha and two beta subunits.</text>
</comment>
<comment type="subcellular location">
    <subcellularLocation>
        <location evidence="1">Cytoplasm</location>
    </subcellularLocation>
</comment>
<comment type="similarity">
    <text evidence="1">Belongs to the class-II aminoacyl-tRNA synthetase family. Phe-tRNA synthetase alpha subunit type 1 subfamily.</text>
</comment>
<reference key="1">
    <citation type="journal article" date="2008" name="J. Bacteriol.">
        <title>Complete genome sequence of Leuconostoc citreum KM20.</title>
        <authorList>
            <person name="Kim J.F."/>
            <person name="Jeong H."/>
            <person name="Lee J.-S."/>
            <person name="Choi S.-H."/>
            <person name="Ha M."/>
            <person name="Hur C.-G."/>
            <person name="Kim J.-S."/>
            <person name="Lee S."/>
            <person name="Park H.-S."/>
            <person name="Park Y.-H."/>
            <person name="Oh T.K."/>
        </authorList>
    </citation>
    <scope>NUCLEOTIDE SEQUENCE [LARGE SCALE GENOMIC DNA]</scope>
    <source>
        <strain>KM20</strain>
    </source>
</reference>
<keyword id="KW-0030">Aminoacyl-tRNA synthetase</keyword>
<keyword id="KW-0067">ATP-binding</keyword>
<keyword id="KW-0963">Cytoplasm</keyword>
<keyword id="KW-0436">Ligase</keyword>
<keyword id="KW-0460">Magnesium</keyword>
<keyword id="KW-0479">Metal-binding</keyword>
<keyword id="KW-0547">Nucleotide-binding</keyword>
<keyword id="KW-0648">Protein biosynthesis</keyword>
<keyword id="KW-1185">Reference proteome</keyword>
<protein>
    <recommendedName>
        <fullName evidence="1">Phenylalanine--tRNA ligase alpha subunit</fullName>
        <ecNumber evidence="1">6.1.1.20</ecNumber>
    </recommendedName>
    <alternativeName>
        <fullName evidence="1">Phenylalanyl-tRNA synthetase alpha subunit</fullName>
        <shortName evidence="1">PheRS</shortName>
    </alternativeName>
</protein>
<proteinExistence type="inferred from homology"/>
<accession>B1MXE0</accession>
<feature type="chain" id="PRO_1000114889" description="Phenylalanine--tRNA ligase alpha subunit">
    <location>
        <begin position="1"/>
        <end position="349"/>
    </location>
</feature>
<feature type="binding site" evidence="1">
    <location>
        <position position="261"/>
    </location>
    <ligand>
        <name>Mg(2+)</name>
        <dbReference type="ChEBI" id="CHEBI:18420"/>
        <note>shared with beta subunit</note>
    </ligand>
</feature>
<evidence type="ECO:0000255" key="1">
    <source>
        <dbReference type="HAMAP-Rule" id="MF_00281"/>
    </source>
</evidence>
<name>SYFA_LEUCK</name>
<dbReference type="EC" id="6.1.1.20" evidence="1"/>
<dbReference type="EMBL" id="DQ489736">
    <property type="protein sequence ID" value="ACA82192.1"/>
    <property type="molecule type" value="Genomic_DNA"/>
</dbReference>
<dbReference type="RefSeq" id="WP_012305059.1">
    <property type="nucleotide sequence ID" value="NC_010471.1"/>
</dbReference>
<dbReference type="SMR" id="B1MXE0"/>
<dbReference type="STRING" id="349519.LCK_00359"/>
<dbReference type="GeneID" id="61102713"/>
<dbReference type="KEGG" id="lci:LCK_00359"/>
<dbReference type="eggNOG" id="COG0016">
    <property type="taxonomic scope" value="Bacteria"/>
</dbReference>
<dbReference type="HOGENOM" id="CLU_025086_0_1_9"/>
<dbReference type="OrthoDB" id="9800719at2"/>
<dbReference type="Proteomes" id="UP000002166">
    <property type="component" value="Chromosome"/>
</dbReference>
<dbReference type="GO" id="GO:0005737">
    <property type="term" value="C:cytoplasm"/>
    <property type="evidence" value="ECO:0007669"/>
    <property type="project" value="UniProtKB-SubCell"/>
</dbReference>
<dbReference type="GO" id="GO:0005524">
    <property type="term" value="F:ATP binding"/>
    <property type="evidence" value="ECO:0007669"/>
    <property type="project" value="UniProtKB-UniRule"/>
</dbReference>
<dbReference type="GO" id="GO:0140096">
    <property type="term" value="F:catalytic activity, acting on a protein"/>
    <property type="evidence" value="ECO:0007669"/>
    <property type="project" value="UniProtKB-ARBA"/>
</dbReference>
<dbReference type="GO" id="GO:0000287">
    <property type="term" value="F:magnesium ion binding"/>
    <property type="evidence" value="ECO:0007669"/>
    <property type="project" value="UniProtKB-UniRule"/>
</dbReference>
<dbReference type="GO" id="GO:0004826">
    <property type="term" value="F:phenylalanine-tRNA ligase activity"/>
    <property type="evidence" value="ECO:0007669"/>
    <property type="project" value="UniProtKB-UniRule"/>
</dbReference>
<dbReference type="GO" id="GO:0016740">
    <property type="term" value="F:transferase activity"/>
    <property type="evidence" value="ECO:0007669"/>
    <property type="project" value="UniProtKB-ARBA"/>
</dbReference>
<dbReference type="GO" id="GO:0000049">
    <property type="term" value="F:tRNA binding"/>
    <property type="evidence" value="ECO:0007669"/>
    <property type="project" value="InterPro"/>
</dbReference>
<dbReference type="GO" id="GO:0006432">
    <property type="term" value="P:phenylalanyl-tRNA aminoacylation"/>
    <property type="evidence" value="ECO:0007669"/>
    <property type="project" value="UniProtKB-UniRule"/>
</dbReference>
<dbReference type="CDD" id="cd00496">
    <property type="entry name" value="PheRS_alpha_core"/>
    <property type="match status" value="1"/>
</dbReference>
<dbReference type="FunFam" id="3.30.930.10:FF:000003">
    <property type="entry name" value="Phenylalanine--tRNA ligase alpha subunit"/>
    <property type="match status" value="1"/>
</dbReference>
<dbReference type="Gene3D" id="3.30.930.10">
    <property type="entry name" value="Bira Bifunctional Protein, Domain 2"/>
    <property type="match status" value="1"/>
</dbReference>
<dbReference type="HAMAP" id="MF_00281">
    <property type="entry name" value="Phe_tRNA_synth_alpha1"/>
    <property type="match status" value="1"/>
</dbReference>
<dbReference type="InterPro" id="IPR006195">
    <property type="entry name" value="aa-tRNA-synth_II"/>
</dbReference>
<dbReference type="InterPro" id="IPR045864">
    <property type="entry name" value="aa-tRNA-synth_II/BPL/LPL"/>
</dbReference>
<dbReference type="InterPro" id="IPR004529">
    <property type="entry name" value="Phe-tRNA-synth_IIc_asu"/>
</dbReference>
<dbReference type="InterPro" id="IPR004188">
    <property type="entry name" value="Phe-tRNA_ligase_II_N"/>
</dbReference>
<dbReference type="InterPro" id="IPR022911">
    <property type="entry name" value="Phe_tRNA_ligase_alpha1_bac"/>
</dbReference>
<dbReference type="InterPro" id="IPR002319">
    <property type="entry name" value="Phenylalanyl-tRNA_Synthase"/>
</dbReference>
<dbReference type="InterPro" id="IPR010978">
    <property type="entry name" value="tRNA-bd_arm"/>
</dbReference>
<dbReference type="NCBIfam" id="TIGR00468">
    <property type="entry name" value="pheS"/>
    <property type="match status" value="1"/>
</dbReference>
<dbReference type="PANTHER" id="PTHR11538:SF41">
    <property type="entry name" value="PHENYLALANINE--TRNA LIGASE, MITOCHONDRIAL"/>
    <property type="match status" value="1"/>
</dbReference>
<dbReference type="PANTHER" id="PTHR11538">
    <property type="entry name" value="PHENYLALANYL-TRNA SYNTHETASE"/>
    <property type="match status" value="1"/>
</dbReference>
<dbReference type="Pfam" id="PF02912">
    <property type="entry name" value="Phe_tRNA-synt_N"/>
    <property type="match status" value="1"/>
</dbReference>
<dbReference type="Pfam" id="PF01409">
    <property type="entry name" value="tRNA-synt_2d"/>
    <property type="match status" value="1"/>
</dbReference>
<dbReference type="SUPFAM" id="SSF55681">
    <property type="entry name" value="Class II aaRS and biotin synthetases"/>
    <property type="match status" value="1"/>
</dbReference>
<dbReference type="SUPFAM" id="SSF46589">
    <property type="entry name" value="tRNA-binding arm"/>
    <property type="match status" value="1"/>
</dbReference>
<dbReference type="PROSITE" id="PS50862">
    <property type="entry name" value="AA_TRNA_LIGASE_II"/>
    <property type="match status" value="1"/>
</dbReference>
<gene>
    <name evidence="1" type="primary">pheS</name>
    <name type="ordered locus">LCK_00359</name>
</gene>